<gene>
    <name evidence="1" type="primary">metN</name>
    <name type="ordered locus">MXAN_0968</name>
</gene>
<sequence length="330" mass="35185">MIAFRGVSKVYTAGGREVAALRNVSLRVEAGEIHGVLGQSGAGKSTLIRCANLLERPTEGSVSVDGQDLLALSPEALRKARQGIGMIFQHFNLFGSKTVAANVAYPLEVAGTPREAIRERVEELLSLVGLSDKAQAYPSQLSGGQKQRVGIARALAPRPRVLLSDEATSALDPETTRSVLGLLRDINQKLGVTLLLITHQMDVVKAICDSVSVLERGRLVEQGKVTELLAHPSTRLHQLCFPAFAAPTDAPSGRRVALTLAGEHARRPLLGTLARQFDVDALLVEGAMERVGNTRVGRLLVDLQGSADAVSQALAYLREQGLTLEEAANG</sequence>
<name>METN_MYXXD</name>
<reference key="1">
    <citation type="journal article" date="2006" name="Proc. Natl. Acad. Sci. U.S.A.">
        <title>Evolution of sensory complexity recorded in a myxobacterial genome.</title>
        <authorList>
            <person name="Goldman B.S."/>
            <person name="Nierman W.C."/>
            <person name="Kaiser D."/>
            <person name="Slater S.C."/>
            <person name="Durkin A.S."/>
            <person name="Eisen J.A."/>
            <person name="Ronning C.M."/>
            <person name="Barbazuk W.B."/>
            <person name="Blanchard M."/>
            <person name="Field C."/>
            <person name="Halling C."/>
            <person name="Hinkle G."/>
            <person name="Iartchuk O."/>
            <person name="Kim H.S."/>
            <person name="Mackenzie C."/>
            <person name="Madupu R."/>
            <person name="Miller N."/>
            <person name="Shvartsbeyn A."/>
            <person name="Sullivan S.A."/>
            <person name="Vaudin M."/>
            <person name="Wiegand R."/>
            <person name="Kaplan H.B."/>
        </authorList>
    </citation>
    <scope>NUCLEOTIDE SEQUENCE [LARGE SCALE GENOMIC DNA]</scope>
    <source>
        <strain>DK1622</strain>
    </source>
</reference>
<feature type="chain" id="PRO_0000270334" description="Methionine import ATP-binding protein MetN">
    <location>
        <begin position="1"/>
        <end position="330"/>
    </location>
</feature>
<feature type="domain" description="ABC transporter" evidence="1">
    <location>
        <begin position="2"/>
        <end position="241"/>
    </location>
</feature>
<feature type="binding site" evidence="1">
    <location>
        <begin position="38"/>
        <end position="45"/>
    </location>
    <ligand>
        <name>ATP</name>
        <dbReference type="ChEBI" id="CHEBI:30616"/>
    </ligand>
</feature>
<protein>
    <recommendedName>
        <fullName evidence="1">Methionine import ATP-binding protein MetN</fullName>
        <ecNumber evidence="1">7.4.2.11</ecNumber>
    </recommendedName>
</protein>
<comment type="function">
    <text evidence="1">Part of the ABC transporter complex MetNIQ involved in methionine import. Responsible for energy coupling to the transport system.</text>
</comment>
<comment type="catalytic activity">
    <reaction evidence="1">
        <text>L-methionine(out) + ATP + H2O = L-methionine(in) + ADP + phosphate + H(+)</text>
        <dbReference type="Rhea" id="RHEA:29779"/>
        <dbReference type="ChEBI" id="CHEBI:15377"/>
        <dbReference type="ChEBI" id="CHEBI:15378"/>
        <dbReference type="ChEBI" id="CHEBI:30616"/>
        <dbReference type="ChEBI" id="CHEBI:43474"/>
        <dbReference type="ChEBI" id="CHEBI:57844"/>
        <dbReference type="ChEBI" id="CHEBI:456216"/>
        <dbReference type="EC" id="7.4.2.11"/>
    </reaction>
</comment>
<comment type="catalytic activity">
    <reaction evidence="1">
        <text>D-methionine(out) + ATP + H2O = D-methionine(in) + ADP + phosphate + H(+)</text>
        <dbReference type="Rhea" id="RHEA:29767"/>
        <dbReference type="ChEBI" id="CHEBI:15377"/>
        <dbReference type="ChEBI" id="CHEBI:15378"/>
        <dbReference type="ChEBI" id="CHEBI:30616"/>
        <dbReference type="ChEBI" id="CHEBI:43474"/>
        <dbReference type="ChEBI" id="CHEBI:57932"/>
        <dbReference type="ChEBI" id="CHEBI:456216"/>
        <dbReference type="EC" id="7.4.2.11"/>
    </reaction>
</comment>
<comment type="subunit">
    <text evidence="1">The complex is composed of two ATP-binding proteins (MetN), two transmembrane proteins (MetI) and a solute-binding protein (MetQ).</text>
</comment>
<comment type="subcellular location">
    <subcellularLocation>
        <location evidence="1">Cell inner membrane</location>
        <topology evidence="1">Peripheral membrane protein</topology>
    </subcellularLocation>
</comment>
<comment type="similarity">
    <text evidence="1">Belongs to the ABC transporter superfamily. Methionine importer (TC 3.A.1.24) family.</text>
</comment>
<keyword id="KW-0029">Amino-acid transport</keyword>
<keyword id="KW-0067">ATP-binding</keyword>
<keyword id="KW-0997">Cell inner membrane</keyword>
<keyword id="KW-1003">Cell membrane</keyword>
<keyword id="KW-0472">Membrane</keyword>
<keyword id="KW-0547">Nucleotide-binding</keyword>
<keyword id="KW-1185">Reference proteome</keyword>
<keyword id="KW-1278">Translocase</keyword>
<keyword id="KW-0813">Transport</keyword>
<proteinExistence type="inferred from homology"/>
<dbReference type="EC" id="7.4.2.11" evidence="1"/>
<dbReference type="EMBL" id="CP000113">
    <property type="protein sequence ID" value="ABF92093.1"/>
    <property type="molecule type" value="Genomic_DNA"/>
</dbReference>
<dbReference type="RefSeq" id="WP_011551089.1">
    <property type="nucleotide sequence ID" value="NC_008095.1"/>
</dbReference>
<dbReference type="SMR" id="Q1DDP4"/>
<dbReference type="STRING" id="246197.MXAN_0968"/>
<dbReference type="EnsemblBacteria" id="ABF92093">
    <property type="protein sequence ID" value="ABF92093"/>
    <property type="gene ID" value="MXAN_0968"/>
</dbReference>
<dbReference type="GeneID" id="41358426"/>
<dbReference type="KEGG" id="mxa:MXAN_0968"/>
<dbReference type="eggNOG" id="COG1135">
    <property type="taxonomic scope" value="Bacteria"/>
</dbReference>
<dbReference type="HOGENOM" id="CLU_000604_1_3_7"/>
<dbReference type="OrthoDB" id="9809450at2"/>
<dbReference type="Proteomes" id="UP000002402">
    <property type="component" value="Chromosome"/>
</dbReference>
<dbReference type="GO" id="GO:0005886">
    <property type="term" value="C:plasma membrane"/>
    <property type="evidence" value="ECO:0007669"/>
    <property type="project" value="UniProtKB-SubCell"/>
</dbReference>
<dbReference type="GO" id="GO:0033232">
    <property type="term" value="F:ABC-type D-methionine transporter activity"/>
    <property type="evidence" value="ECO:0007669"/>
    <property type="project" value="UniProtKB-EC"/>
</dbReference>
<dbReference type="GO" id="GO:0005524">
    <property type="term" value="F:ATP binding"/>
    <property type="evidence" value="ECO:0007669"/>
    <property type="project" value="UniProtKB-KW"/>
</dbReference>
<dbReference type="GO" id="GO:0016887">
    <property type="term" value="F:ATP hydrolysis activity"/>
    <property type="evidence" value="ECO:0007669"/>
    <property type="project" value="InterPro"/>
</dbReference>
<dbReference type="CDD" id="cd03258">
    <property type="entry name" value="ABC_MetN_methionine_transporter"/>
    <property type="match status" value="1"/>
</dbReference>
<dbReference type="FunFam" id="3.40.50.300:FF:000056">
    <property type="entry name" value="Cell division ATP-binding protein FtsE"/>
    <property type="match status" value="1"/>
</dbReference>
<dbReference type="Gene3D" id="3.30.70.260">
    <property type="match status" value="1"/>
</dbReference>
<dbReference type="Gene3D" id="3.40.50.300">
    <property type="entry name" value="P-loop containing nucleotide triphosphate hydrolases"/>
    <property type="match status" value="1"/>
</dbReference>
<dbReference type="InterPro" id="IPR003593">
    <property type="entry name" value="AAA+_ATPase"/>
</dbReference>
<dbReference type="InterPro" id="IPR003439">
    <property type="entry name" value="ABC_transporter-like_ATP-bd"/>
</dbReference>
<dbReference type="InterPro" id="IPR017871">
    <property type="entry name" value="ABC_transporter-like_CS"/>
</dbReference>
<dbReference type="InterPro" id="IPR045865">
    <property type="entry name" value="ACT-like_dom_sf"/>
</dbReference>
<dbReference type="InterPro" id="IPR041701">
    <property type="entry name" value="MetN_ABC"/>
</dbReference>
<dbReference type="InterPro" id="IPR050086">
    <property type="entry name" value="MetN_ABC_transporter-like"/>
</dbReference>
<dbReference type="InterPro" id="IPR018449">
    <property type="entry name" value="NIL_domain"/>
</dbReference>
<dbReference type="InterPro" id="IPR027417">
    <property type="entry name" value="P-loop_NTPase"/>
</dbReference>
<dbReference type="PANTHER" id="PTHR43166">
    <property type="entry name" value="AMINO ACID IMPORT ATP-BINDING PROTEIN"/>
    <property type="match status" value="1"/>
</dbReference>
<dbReference type="PANTHER" id="PTHR43166:SF30">
    <property type="entry name" value="METHIONINE IMPORT ATP-BINDING PROTEIN METN"/>
    <property type="match status" value="1"/>
</dbReference>
<dbReference type="Pfam" id="PF00005">
    <property type="entry name" value="ABC_tran"/>
    <property type="match status" value="1"/>
</dbReference>
<dbReference type="Pfam" id="PF09383">
    <property type="entry name" value="NIL"/>
    <property type="match status" value="1"/>
</dbReference>
<dbReference type="SMART" id="SM00382">
    <property type="entry name" value="AAA"/>
    <property type="match status" value="1"/>
</dbReference>
<dbReference type="SMART" id="SM00930">
    <property type="entry name" value="NIL"/>
    <property type="match status" value="1"/>
</dbReference>
<dbReference type="SUPFAM" id="SSF55021">
    <property type="entry name" value="ACT-like"/>
    <property type="match status" value="1"/>
</dbReference>
<dbReference type="SUPFAM" id="SSF52540">
    <property type="entry name" value="P-loop containing nucleoside triphosphate hydrolases"/>
    <property type="match status" value="1"/>
</dbReference>
<dbReference type="PROSITE" id="PS00211">
    <property type="entry name" value="ABC_TRANSPORTER_1"/>
    <property type="match status" value="1"/>
</dbReference>
<dbReference type="PROSITE" id="PS50893">
    <property type="entry name" value="ABC_TRANSPORTER_2"/>
    <property type="match status" value="1"/>
</dbReference>
<dbReference type="PROSITE" id="PS51264">
    <property type="entry name" value="METN"/>
    <property type="match status" value="1"/>
</dbReference>
<organism>
    <name type="scientific">Myxococcus xanthus (strain DK1622)</name>
    <dbReference type="NCBI Taxonomy" id="246197"/>
    <lineage>
        <taxon>Bacteria</taxon>
        <taxon>Pseudomonadati</taxon>
        <taxon>Myxococcota</taxon>
        <taxon>Myxococcia</taxon>
        <taxon>Myxococcales</taxon>
        <taxon>Cystobacterineae</taxon>
        <taxon>Myxococcaceae</taxon>
        <taxon>Myxococcus</taxon>
    </lineage>
</organism>
<accession>Q1DDP4</accession>
<evidence type="ECO:0000255" key="1">
    <source>
        <dbReference type="HAMAP-Rule" id="MF_01719"/>
    </source>
</evidence>